<gene>
    <name evidence="4" type="primary">NRR</name>
    <name evidence="7" type="ORF">OsI_00248</name>
</gene>
<organism>
    <name type="scientific">Oryza sativa subsp. indica</name>
    <name type="common">Rice</name>
    <dbReference type="NCBI Taxonomy" id="39946"/>
    <lineage>
        <taxon>Eukaryota</taxon>
        <taxon>Viridiplantae</taxon>
        <taxon>Streptophyta</taxon>
        <taxon>Embryophyta</taxon>
        <taxon>Tracheophyta</taxon>
        <taxon>Spermatophyta</taxon>
        <taxon>Magnoliopsida</taxon>
        <taxon>Liliopsida</taxon>
        <taxon>Poales</taxon>
        <taxon>Poaceae</taxon>
        <taxon>BOP clade</taxon>
        <taxon>Oryzoideae</taxon>
        <taxon>Oryzeae</taxon>
        <taxon>Oryzinae</taxon>
        <taxon>Oryza</taxon>
        <taxon>Oryza sativa</taxon>
    </lineage>
</organism>
<keyword id="KW-0539">Nucleus</keyword>
<keyword id="KW-0611">Plant defense</keyword>
<keyword id="KW-1185">Reference proteome</keyword>
<feature type="chain" id="PRO_0000437007" description="Protein NEGATIVE REGULATOR OF RESISTANCE">
    <location>
        <begin position="1"/>
        <end position="131"/>
    </location>
</feature>
<feature type="region of interest" description="Disordered" evidence="1">
    <location>
        <begin position="1"/>
        <end position="33"/>
    </location>
</feature>
<feature type="region of interest" description="Disordered" evidence="1">
    <location>
        <begin position="51"/>
        <end position="131"/>
    </location>
</feature>
<feature type="short sequence motif" description="Nuclear localization signal" evidence="5">
    <location>
        <begin position="12"/>
        <end position="15"/>
    </location>
</feature>
<feature type="compositionally biased region" description="Low complexity" evidence="1">
    <location>
        <begin position="116"/>
        <end position="131"/>
    </location>
</feature>
<feature type="mutagenesis site" description="Slightly reduces NPR1/NH1 binding efficiency." evidence="3">
    <original>E</original>
    <variation>K</variation>
    <location>
        <position position="39"/>
    </location>
</feature>
<feature type="mutagenesis site" description="Slightly reduces NPR1/NH1 binding efficiency." evidence="3">
    <original>F</original>
    <variation>G</variation>
    <location>
        <position position="40"/>
    </location>
</feature>
<feature type="mutagenesis site" description="Slightly reduces NPR1/NH1 binding efficiency." evidence="3">
    <original>L</original>
    <variation>G</variation>
    <location>
        <position position="44"/>
    </location>
</feature>
<comment type="function">
    <text evidence="3">Acts as a negative regulator of disease resistance. Acts on basal resistance, age-related resistance and resistance mediated by the LRR receptor kinase XA21. Plants over-expressing NRR display enhanced susceptibility to the bacterial blight Xanthomonas oryzae pv. oryzae (Xoo).</text>
</comment>
<comment type="subunit">
    <text evidence="2 3">Interacts with NPR1/NH1 (PubMed:15986920, PubMed:16115061). Interacts with NPR2/NH2 (PubMed:15986920).</text>
</comment>
<comment type="subcellular location">
    <subcellularLocation>
        <location evidence="3">Nucleus</location>
    </subcellularLocation>
</comment>
<comment type="similarity">
    <text>Belongs to the NPR1-interactor family.</text>
</comment>
<name>NRR_ORYSI</name>
<accession>Q5EN53</accession>
<protein>
    <recommendedName>
        <fullName evidence="4">Protein NEGATIVE REGULATOR OF RESISTANCE</fullName>
    </recommendedName>
    <alternativeName>
        <fullName evidence="6">NPR1-interactor</fullName>
    </alternativeName>
</protein>
<dbReference type="EMBL" id="AY846391">
    <property type="protein sequence ID" value="AAW80625.1"/>
    <property type="molecule type" value="mRNA"/>
</dbReference>
<dbReference type="EMBL" id="CM000126">
    <property type="protein sequence ID" value="EAY72394.1"/>
    <property type="molecule type" value="Genomic_DNA"/>
</dbReference>
<dbReference type="STRING" id="39946.Q5EN53"/>
<dbReference type="EnsemblPlants" id="BGIOSGA002459-TA">
    <property type="protein sequence ID" value="BGIOSGA002459-PA"/>
    <property type="gene ID" value="BGIOSGA002459"/>
</dbReference>
<dbReference type="EnsemblPlants" id="OsKYG_01g0002130.01">
    <property type="protein sequence ID" value="OsKYG_01g0002130.01"/>
    <property type="gene ID" value="OsKYG_01g0002130"/>
</dbReference>
<dbReference type="EnsemblPlants" id="OsLima_01g0001980.01">
    <property type="protein sequence ID" value="OsLima_01g0001980.01"/>
    <property type="gene ID" value="OsLima_01g0001980"/>
</dbReference>
<dbReference type="EnsemblPlants" id="OsLiXu_01g0002150.01">
    <property type="protein sequence ID" value="OsLiXu_01g0002150.01"/>
    <property type="gene ID" value="OsLiXu_01g0002150"/>
</dbReference>
<dbReference type="EnsemblPlants" id="OsMH63_01G002140_01">
    <property type="protein sequence ID" value="OsMH63_01G002140_01"/>
    <property type="gene ID" value="OsMH63_01G002140"/>
</dbReference>
<dbReference type="EnsemblPlants" id="OsPr106_01g0002130.01">
    <property type="protein sequence ID" value="OsPr106_01g0002130.01"/>
    <property type="gene ID" value="OsPr106_01g0002130"/>
</dbReference>
<dbReference type="EnsemblPlants" id="OsZS97_01G002070_01">
    <property type="protein sequence ID" value="OsZS97_01G002070_01"/>
    <property type="gene ID" value="OsZS97_01G002070"/>
</dbReference>
<dbReference type="Gramene" id="BGIOSGA002459-TA">
    <property type="protein sequence ID" value="BGIOSGA002459-PA"/>
    <property type="gene ID" value="BGIOSGA002459"/>
</dbReference>
<dbReference type="Gramene" id="OsKYG_01g0002130.01">
    <property type="protein sequence ID" value="OsKYG_01g0002130.01"/>
    <property type="gene ID" value="OsKYG_01g0002130"/>
</dbReference>
<dbReference type="Gramene" id="OsLima_01g0001980.01">
    <property type="protein sequence ID" value="OsLima_01g0001980.01"/>
    <property type="gene ID" value="OsLima_01g0001980"/>
</dbReference>
<dbReference type="Gramene" id="OsLiXu_01g0002150.01">
    <property type="protein sequence ID" value="OsLiXu_01g0002150.01"/>
    <property type="gene ID" value="OsLiXu_01g0002150"/>
</dbReference>
<dbReference type="Gramene" id="OsMH63_01G002140_01">
    <property type="protein sequence ID" value="OsMH63_01G002140_01"/>
    <property type="gene ID" value="OsMH63_01G002140"/>
</dbReference>
<dbReference type="Gramene" id="OsPr106_01g0002130.01">
    <property type="protein sequence ID" value="OsPr106_01g0002130.01"/>
    <property type="gene ID" value="OsPr106_01g0002130"/>
</dbReference>
<dbReference type="Gramene" id="OsZS97_01G002070_01">
    <property type="protein sequence ID" value="OsZS97_01G002070_01"/>
    <property type="gene ID" value="OsZS97_01G002070"/>
</dbReference>
<dbReference type="HOGENOM" id="CLU_146278_0_0_1"/>
<dbReference type="OMA" id="CWEDFAD"/>
<dbReference type="Proteomes" id="UP000007015">
    <property type="component" value="Chromosome 1"/>
</dbReference>
<dbReference type="GO" id="GO:0005634">
    <property type="term" value="C:nucleus"/>
    <property type="evidence" value="ECO:0007669"/>
    <property type="project" value="UniProtKB-SubCell"/>
</dbReference>
<dbReference type="GO" id="GO:0042742">
    <property type="term" value="P:defense response to bacterium"/>
    <property type="evidence" value="ECO:0007669"/>
    <property type="project" value="EnsemblPlants"/>
</dbReference>
<dbReference type="GO" id="GO:0010112">
    <property type="term" value="P:regulation of systemic acquired resistance"/>
    <property type="evidence" value="ECO:0007669"/>
    <property type="project" value="InterPro"/>
</dbReference>
<dbReference type="InterPro" id="IPR031425">
    <property type="entry name" value="NPR1/NH1-interacting"/>
</dbReference>
<dbReference type="PANTHER" id="PTHR33669">
    <property type="entry name" value="PROTEIN NEGATIVE REGULATOR OF RESISTANCE"/>
    <property type="match status" value="1"/>
</dbReference>
<dbReference type="PANTHER" id="PTHR33669:SF12">
    <property type="entry name" value="PROTEIN NEGATIVE REGULATOR OF RESISTANCE"/>
    <property type="match status" value="1"/>
</dbReference>
<proteinExistence type="evidence at protein level"/>
<sequence>MDATTTDATTAKRKRPAASDIADDAPTTVDEVSDAEVEEFYAILRRMRDATRRLGARPPPPRAPAWRPSFSWEDFADAPPKQAPPPPQQPADHERVAENATPPRRPAPGLDLNVEPPSDAPATPRSARAPA</sequence>
<reference key="1">
    <citation type="journal article" date="2005" name="Plant J.">
        <title>Rice NRR, a negative regulator of disease resistance, interacts with Arabidopsis NPR1 and rice NH1.</title>
        <authorList>
            <person name="Chern M."/>
            <person name="Canlas P.E."/>
            <person name="Fitzgerald H.A."/>
            <person name="Ronald P.C."/>
        </authorList>
    </citation>
    <scope>NUCLEOTIDE SEQUENCE [MRNA]</scope>
    <scope>FUNCTION</scope>
    <scope>INTERACTION WITH NPR1/NH1</scope>
    <scope>SUBCELLULAR LOCATION</scope>
    <scope>MUTAGENESIS OF GLU-39; PHE-40 AND LEU-44</scope>
    <source>
        <strain>cv. IRBB21</strain>
    </source>
</reference>
<reference key="2">
    <citation type="journal article" date="2005" name="PLoS Biol.">
        <title>The genomes of Oryza sativa: a history of duplications.</title>
        <authorList>
            <person name="Yu J."/>
            <person name="Wang J."/>
            <person name="Lin W."/>
            <person name="Li S."/>
            <person name="Li H."/>
            <person name="Zhou J."/>
            <person name="Ni P."/>
            <person name="Dong W."/>
            <person name="Hu S."/>
            <person name="Zeng C."/>
            <person name="Zhang J."/>
            <person name="Zhang Y."/>
            <person name="Li R."/>
            <person name="Xu Z."/>
            <person name="Li S."/>
            <person name="Li X."/>
            <person name="Zheng H."/>
            <person name="Cong L."/>
            <person name="Lin L."/>
            <person name="Yin J."/>
            <person name="Geng J."/>
            <person name="Li G."/>
            <person name="Shi J."/>
            <person name="Liu J."/>
            <person name="Lv H."/>
            <person name="Li J."/>
            <person name="Wang J."/>
            <person name="Deng Y."/>
            <person name="Ran L."/>
            <person name="Shi X."/>
            <person name="Wang X."/>
            <person name="Wu Q."/>
            <person name="Li C."/>
            <person name="Ren X."/>
            <person name="Wang J."/>
            <person name="Wang X."/>
            <person name="Li D."/>
            <person name="Liu D."/>
            <person name="Zhang X."/>
            <person name="Ji Z."/>
            <person name="Zhao W."/>
            <person name="Sun Y."/>
            <person name="Zhang Z."/>
            <person name="Bao J."/>
            <person name="Han Y."/>
            <person name="Dong L."/>
            <person name="Ji J."/>
            <person name="Chen P."/>
            <person name="Wu S."/>
            <person name="Liu J."/>
            <person name="Xiao Y."/>
            <person name="Bu D."/>
            <person name="Tan J."/>
            <person name="Yang L."/>
            <person name="Ye C."/>
            <person name="Zhang J."/>
            <person name="Xu J."/>
            <person name="Zhou Y."/>
            <person name="Yu Y."/>
            <person name="Zhang B."/>
            <person name="Zhuang S."/>
            <person name="Wei H."/>
            <person name="Liu B."/>
            <person name="Lei M."/>
            <person name="Yu H."/>
            <person name="Li Y."/>
            <person name="Xu H."/>
            <person name="Wei S."/>
            <person name="He X."/>
            <person name="Fang L."/>
            <person name="Zhang Z."/>
            <person name="Zhang Y."/>
            <person name="Huang X."/>
            <person name="Su Z."/>
            <person name="Tong W."/>
            <person name="Li J."/>
            <person name="Tong Z."/>
            <person name="Li S."/>
            <person name="Ye J."/>
            <person name="Wang L."/>
            <person name="Fang L."/>
            <person name="Lei T."/>
            <person name="Chen C.-S."/>
            <person name="Chen H.-C."/>
            <person name="Xu Z."/>
            <person name="Li H."/>
            <person name="Huang H."/>
            <person name="Zhang F."/>
            <person name="Xu H."/>
            <person name="Li N."/>
            <person name="Zhao C."/>
            <person name="Li S."/>
            <person name="Dong L."/>
            <person name="Huang Y."/>
            <person name="Li L."/>
            <person name="Xi Y."/>
            <person name="Qi Q."/>
            <person name="Li W."/>
            <person name="Zhang B."/>
            <person name="Hu W."/>
            <person name="Zhang Y."/>
            <person name="Tian X."/>
            <person name="Jiao Y."/>
            <person name="Liang X."/>
            <person name="Jin J."/>
            <person name="Gao L."/>
            <person name="Zheng W."/>
            <person name="Hao B."/>
            <person name="Liu S.-M."/>
            <person name="Wang W."/>
            <person name="Yuan L."/>
            <person name="Cao M."/>
            <person name="McDermott J."/>
            <person name="Samudrala R."/>
            <person name="Wang J."/>
            <person name="Wong G.K.-S."/>
            <person name="Yang H."/>
        </authorList>
    </citation>
    <scope>NUCLEOTIDE SEQUENCE [LARGE SCALE GENOMIC DNA]</scope>
    <source>
        <strain>cv. 93-11</strain>
    </source>
</reference>
<reference key="3">
    <citation type="journal article" date="2005" name="Mol. Plant Microbe Interact.">
        <title>Overexpression of a rice NPR1 homolog leads to constitutive activation of defense response and hypersensitivity to light.</title>
        <authorList>
            <person name="Chern M."/>
            <person name="Fitzgerald H.A."/>
            <person name="Canlas P.E."/>
            <person name="Navarre D.A."/>
            <person name="Ronald P.C."/>
        </authorList>
    </citation>
    <scope>INTERACTION WITH NPR1/NH1 AND NPR2/NH2</scope>
</reference>
<evidence type="ECO:0000256" key="1">
    <source>
        <dbReference type="SAM" id="MobiDB-lite"/>
    </source>
</evidence>
<evidence type="ECO:0000269" key="2">
    <source>
    </source>
</evidence>
<evidence type="ECO:0000269" key="3">
    <source>
    </source>
</evidence>
<evidence type="ECO:0000303" key="4">
    <source>
    </source>
</evidence>
<evidence type="ECO:0000305" key="5">
    <source>
    </source>
</evidence>
<evidence type="ECO:0000312" key="6">
    <source>
        <dbReference type="EMBL" id="AAW80625.1"/>
    </source>
</evidence>
<evidence type="ECO:0000312" key="7">
    <source>
        <dbReference type="EMBL" id="EAY72394.1"/>
    </source>
</evidence>